<keyword id="KW-1185">Reference proteome</keyword>
<keyword id="KW-0687">Ribonucleoprotein</keyword>
<keyword id="KW-0689">Ribosomal protein</keyword>
<keyword id="KW-0694">RNA-binding</keyword>
<keyword id="KW-0699">rRNA-binding</keyword>
<keyword id="KW-0820">tRNA-binding</keyword>
<gene>
    <name evidence="1" type="primary">rplP</name>
    <name type="ordered locus">H16_A3477</name>
</gene>
<organism>
    <name type="scientific">Cupriavidus necator (strain ATCC 17699 / DSM 428 / KCTC 22496 / NCIMB 10442 / H16 / Stanier 337)</name>
    <name type="common">Ralstonia eutropha</name>
    <dbReference type="NCBI Taxonomy" id="381666"/>
    <lineage>
        <taxon>Bacteria</taxon>
        <taxon>Pseudomonadati</taxon>
        <taxon>Pseudomonadota</taxon>
        <taxon>Betaproteobacteria</taxon>
        <taxon>Burkholderiales</taxon>
        <taxon>Burkholderiaceae</taxon>
        <taxon>Cupriavidus</taxon>
    </lineage>
</organism>
<dbReference type="EMBL" id="AM260479">
    <property type="protein sequence ID" value="CAJ94545.1"/>
    <property type="molecule type" value="Genomic_DNA"/>
</dbReference>
<dbReference type="RefSeq" id="WP_010812391.1">
    <property type="nucleotide sequence ID" value="NZ_CP039287.1"/>
</dbReference>
<dbReference type="SMR" id="Q0K626"/>
<dbReference type="STRING" id="381666.H16_A3477"/>
<dbReference type="GeneID" id="29762805"/>
<dbReference type="KEGG" id="reh:H16_A3477"/>
<dbReference type="eggNOG" id="COG0197">
    <property type="taxonomic scope" value="Bacteria"/>
</dbReference>
<dbReference type="HOGENOM" id="CLU_078858_2_1_4"/>
<dbReference type="OrthoDB" id="9802589at2"/>
<dbReference type="Proteomes" id="UP000008210">
    <property type="component" value="Chromosome 1"/>
</dbReference>
<dbReference type="GO" id="GO:0022625">
    <property type="term" value="C:cytosolic large ribosomal subunit"/>
    <property type="evidence" value="ECO:0007669"/>
    <property type="project" value="TreeGrafter"/>
</dbReference>
<dbReference type="GO" id="GO:0019843">
    <property type="term" value="F:rRNA binding"/>
    <property type="evidence" value="ECO:0007669"/>
    <property type="project" value="UniProtKB-UniRule"/>
</dbReference>
<dbReference type="GO" id="GO:0003735">
    <property type="term" value="F:structural constituent of ribosome"/>
    <property type="evidence" value="ECO:0007669"/>
    <property type="project" value="InterPro"/>
</dbReference>
<dbReference type="GO" id="GO:0000049">
    <property type="term" value="F:tRNA binding"/>
    <property type="evidence" value="ECO:0007669"/>
    <property type="project" value="UniProtKB-KW"/>
</dbReference>
<dbReference type="GO" id="GO:0006412">
    <property type="term" value="P:translation"/>
    <property type="evidence" value="ECO:0007669"/>
    <property type="project" value="UniProtKB-UniRule"/>
</dbReference>
<dbReference type="CDD" id="cd01433">
    <property type="entry name" value="Ribosomal_L16_L10e"/>
    <property type="match status" value="1"/>
</dbReference>
<dbReference type="FunFam" id="3.90.1170.10:FF:000001">
    <property type="entry name" value="50S ribosomal protein L16"/>
    <property type="match status" value="1"/>
</dbReference>
<dbReference type="Gene3D" id="3.90.1170.10">
    <property type="entry name" value="Ribosomal protein L10e/L16"/>
    <property type="match status" value="1"/>
</dbReference>
<dbReference type="HAMAP" id="MF_01342">
    <property type="entry name" value="Ribosomal_uL16"/>
    <property type="match status" value="1"/>
</dbReference>
<dbReference type="InterPro" id="IPR047873">
    <property type="entry name" value="Ribosomal_uL16"/>
</dbReference>
<dbReference type="InterPro" id="IPR000114">
    <property type="entry name" value="Ribosomal_uL16_bact-type"/>
</dbReference>
<dbReference type="InterPro" id="IPR020798">
    <property type="entry name" value="Ribosomal_uL16_CS"/>
</dbReference>
<dbReference type="InterPro" id="IPR016180">
    <property type="entry name" value="Ribosomal_uL16_dom"/>
</dbReference>
<dbReference type="InterPro" id="IPR036920">
    <property type="entry name" value="Ribosomal_uL16_sf"/>
</dbReference>
<dbReference type="NCBIfam" id="TIGR01164">
    <property type="entry name" value="rplP_bact"/>
    <property type="match status" value="1"/>
</dbReference>
<dbReference type="PANTHER" id="PTHR12220">
    <property type="entry name" value="50S/60S RIBOSOMAL PROTEIN L16"/>
    <property type="match status" value="1"/>
</dbReference>
<dbReference type="PANTHER" id="PTHR12220:SF13">
    <property type="entry name" value="LARGE RIBOSOMAL SUBUNIT PROTEIN UL16M"/>
    <property type="match status" value="1"/>
</dbReference>
<dbReference type="Pfam" id="PF00252">
    <property type="entry name" value="Ribosomal_L16"/>
    <property type="match status" value="1"/>
</dbReference>
<dbReference type="PRINTS" id="PR00060">
    <property type="entry name" value="RIBOSOMALL16"/>
</dbReference>
<dbReference type="SUPFAM" id="SSF54686">
    <property type="entry name" value="Ribosomal protein L16p/L10e"/>
    <property type="match status" value="1"/>
</dbReference>
<dbReference type="PROSITE" id="PS00586">
    <property type="entry name" value="RIBOSOMAL_L16_1"/>
    <property type="match status" value="1"/>
</dbReference>
<evidence type="ECO:0000255" key="1">
    <source>
        <dbReference type="HAMAP-Rule" id="MF_01342"/>
    </source>
</evidence>
<evidence type="ECO:0000256" key="2">
    <source>
        <dbReference type="SAM" id="MobiDB-lite"/>
    </source>
</evidence>
<evidence type="ECO:0000305" key="3"/>
<reference key="1">
    <citation type="journal article" date="2006" name="Nat. Biotechnol.">
        <title>Genome sequence of the bioplastic-producing 'Knallgas' bacterium Ralstonia eutropha H16.</title>
        <authorList>
            <person name="Pohlmann A."/>
            <person name="Fricke W.F."/>
            <person name="Reinecke F."/>
            <person name="Kusian B."/>
            <person name="Liesegang H."/>
            <person name="Cramm R."/>
            <person name="Eitinger T."/>
            <person name="Ewering C."/>
            <person name="Poetter M."/>
            <person name="Schwartz E."/>
            <person name="Strittmatter A."/>
            <person name="Voss I."/>
            <person name="Gottschalk G."/>
            <person name="Steinbuechel A."/>
            <person name="Friedrich B."/>
            <person name="Bowien B."/>
        </authorList>
    </citation>
    <scope>NUCLEOTIDE SEQUENCE [LARGE SCALE GENOMIC DNA]</scope>
    <source>
        <strain>ATCC 17699 / DSM 428 / KCTC 22496 / NCIMB 10442 / H16 / Stanier 337</strain>
    </source>
</reference>
<comment type="function">
    <text evidence="1">Binds 23S rRNA and is also seen to make contacts with the A and possibly P site tRNAs.</text>
</comment>
<comment type="subunit">
    <text evidence="1">Part of the 50S ribosomal subunit.</text>
</comment>
<comment type="similarity">
    <text evidence="1">Belongs to the universal ribosomal protein uL16 family.</text>
</comment>
<accession>Q0K626</accession>
<name>RL16_CUPNH</name>
<feature type="chain" id="PRO_1000054687" description="Large ribosomal subunit protein uL16">
    <location>
        <begin position="1"/>
        <end position="138"/>
    </location>
</feature>
<feature type="region of interest" description="Disordered" evidence="2">
    <location>
        <begin position="1"/>
        <end position="24"/>
    </location>
</feature>
<feature type="compositionally biased region" description="Basic residues" evidence="2">
    <location>
        <begin position="1"/>
        <end position="13"/>
    </location>
</feature>
<protein>
    <recommendedName>
        <fullName evidence="1">Large ribosomal subunit protein uL16</fullName>
    </recommendedName>
    <alternativeName>
        <fullName evidence="3">50S ribosomal protein L16</fullName>
    </alternativeName>
</protein>
<sequence>MLQPKRRKYRKEQKGRNTGKATRGNAVSFGEFGLKAMGRGRLTARQIESARRAMTRHIKRGGRIWIRIFPDKPISKKPAEVRMGNGKGNPEYYVAEIQPGKMLYEMDGVSEDLAREAFRLAAAKLPIATNFVVRQVGT</sequence>
<proteinExistence type="inferred from homology"/>